<keyword id="KW-0028">Amino-acid biosynthesis</keyword>
<keyword id="KW-0963">Cytoplasm</keyword>
<keyword id="KW-0368">Histidine biosynthesis</keyword>
<keyword id="KW-0413">Isomerase</keyword>
<evidence type="ECO:0000255" key="1">
    <source>
        <dbReference type="HAMAP-Rule" id="MF_01014"/>
    </source>
</evidence>
<protein>
    <recommendedName>
        <fullName evidence="1">1-(5-phosphoribosyl)-5-[(5-phosphoribosylamino)methylideneamino] imidazole-4-carboxamide isomerase</fullName>
        <ecNumber evidence="1">5.3.1.16</ecNumber>
    </recommendedName>
    <alternativeName>
        <fullName evidence="1">Phosphoribosylformimino-5-aminoimidazole carboxamide ribotide isomerase</fullName>
    </alternativeName>
</protein>
<comment type="catalytic activity">
    <reaction evidence="1">
        <text>1-(5-phospho-beta-D-ribosyl)-5-[(5-phospho-beta-D-ribosylamino)methylideneamino]imidazole-4-carboxamide = 5-[(5-phospho-1-deoxy-D-ribulos-1-ylimino)methylamino]-1-(5-phospho-beta-D-ribosyl)imidazole-4-carboxamide</text>
        <dbReference type="Rhea" id="RHEA:15469"/>
        <dbReference type="ChEBI" id="CHEBI:58435"/>
        <dbReference type="ChEBI" id="CHEBI:58525"/>
        <dbReference type="EC" id="5.3.1.16"/>
    </reaction>
</comment>
<comment type="pathway">
    <text evidence="1">Amino-acid biosynthesis; L-histidine biosynthesis; L-histidine from 5-phospho-alpha-D-ribose 1-diphosphate: step 4/9.</text>
</comment>
<comment type="subcellular location">
    <subcellularLocation>
        <location evidence="1">Cytoplasm</location>
    </subcellularLocation>
</comment>
<comment type="similarity">
    <text evidence="1">Belongs to the HisA/HisF family.</text>
</comment>
<feature type="chain" id="PRO_1000213226" description="1-(5-phosphoribosyl)-5-[(5-phosphoribosylamino)methylideneamino] imidazole-4-carboxamide isomerase">
    <location>
        <begin position="1"/>
        <end position="245"/>
    </location>
</feature>
<feature type="active site" description="Proton acceptor" evidence="1">
    <location>
        <position position="7"/>
    </location>
</feature>
<feature type="active site" description="Proton donor" evidence="1">
    <location>
        <position position="129"/>
    </location>
</feature>
<accession>C4ZSB3</accession>
<dbReference type="EC" id="5.3.1.16" evidence="1"/>
<dbReference type="EMBL" id="CP001396">
    <property type="protein sequence ID" value="ACR63835.1"/>
    <property type="molecule type" value="Genomic_DNA"/>
</dbReference>
<dbReference type="RefSeq" id="WP_000586462.1">
    <property type="nucleotide sequence ID" value="NC_012759.1"/>
</dbReference>
<dbReference type="SMR" id="C4ZSB3"/>
<dbReference type="KEGG" id="ebw:BWG_1815"/>
<dbReference type="HOGENOM" id="CLU_048577_1_2_6"/>
<dbReference type="UniPathway" id="UPA00031">
    <property type="reaction ID" value="UER00009"/>
</dbReference>
<dbReference type="GO" id="GO:0005737">
    <property type="term" value="C:cytoplasm"/>
    <property type="evidence" value="ECO:0007669"/>
    <property type="project" value="UniProtKB-SubCell"/>
</dbReference>
<dbReference type="GO" id="GO:0003949">
    <property type="term" value="F:1-(5-phosphoribosyl)-5-[(5-phosphoribosylamino)methylideneamino]imidazole-4-carboxamide isomerase activity"/>
    <property type="evidence" value="ECO:0007669"/>
    <property type="project" value="UniProtKB-UniRule"/>
</dbReference>
<dbReference type="GO" id="GO:0000105">
    <property type="term" value="P:L-histidine biosynthetic process"/>
    <property type="evidence" value="ECO:0007669"/>
    <property type="project" value="UniProtKB-UniRule"/>
</dbReference>
<dbReference type="GO" id="GO:0000162">
    <property type="term" value="P:L-tryptophan biosynthetic process"/>
    <property type="evidence" value="ECO:0007669"/>
    <property type="project" value="TreeGrafter"/>
</dbReference>
<dbReference type="CDD" id="cd04732">
    <property type="entry name" value="HisA"/>
    <property type="match status" value="1"/>
</dbReference>
<dbReference type="FunFam" id="3.20.20.70:FF:000009">
    <property type="entry name" value="1-(5-phosphoribosyl)-5-[(5-phosphoribosylamino)methylideneamino] imidazole-4-carboxamide isomerase"/>
    <property type="match status" value="1"/>
</dbReference>
<dbReference type="Gene3D" id="3.20.20.70">
    <property type="entry name" value="Aldolase class I"/>
    <property type="match status" value="1"/>
</dbReference>
<dbReference type="HAMAP" id="MF_01014">
    <property type="entry name" value="HisA"/>
    <property type="match status" value="1"/>
</dbReference>
<dbReference type="InterPro" id="IPR013785">
    <property type="entry name" value="Aldolase_TIM"/>
</dbReference>
<dbReference type="InterPro" id="IPR006062">
    <property type="entry name" value="His_biosynth"/>
</dbReference>
<dbReference type="InterPro" id="IPR006063">
    <property type="entry name" value="HisA_bact_arch"/>
</dbReference>
<dbReference type="InterPro" id="IPR044524">
    <property type="entry name" value="Isoase_HisA-like"/>
</dbReference>
<dbReference type="InterPro" id="IPR023016">
    <property type="entry name" value="Isoase_HisA-like_bact"/>
</dbReference>
<dbReference type="InterPro" id="IPR011060">
    <property type="entry name" value="RibuloseP-bd_barrel"/>
</dbReference>
<dbReference type="NCBIfam" id="TIGR00007">
    <property type="entry name" value="1-(5-phosphoribosyl)-5-[(5-phosphoribosylamino)methylideneamino]imidazole-4-carboxamide isomerase"/>
    <property type="match status" value="1"/>
</dbReference>
<dbReference type="PANTHER" id="PTHR43090">
    <property type="entry name" value="1-(5-PHOSPHORIBOSYL)-5-[(5-PHOSPHORIBOSYLAMINO)METHYLIDENEAMINO] IMIDAZOLE-4-CARBOXAMIDE ISOMERASE"/>
    <property type="match status" value="1"/>
</dbReference>
<dbReference type="PANTHER" id="PTHR43090:SF2">
    <property type="entry name" value="1-(5-PHOSPHORIBOSYL)-5-[(5-PHOSPHORIBOSYLAMINO)METHYLIDENEAMINO] IMIDAZOLE-4-CARBOXAMIDE ISOMERASE"/>
    <property type="match status" value="1"/>
</dbReference>
<dbReference type="Pfam" id="PF00977">
    <property type="entry name" value="His_biosynth"/>
    <property type="match status" value="1"/>
</dbReference>
<dbReference type="SUPFAM" id="SSF51366">
    <property type="entry name" value="Ribulose-phoshate binding barrel"/>
    <property type="match status" value="1"/>
</dbReference>
<reference key="1">
    <citation type="journal article" date="2009" name="J. Bacteriol.">
        <title>Genomic sequencing reveals regulatory mutations and recombinational events in the widely used MC4100 lineage of Escherichia coli K-12.</title>
        <authorList>
            <person name="Ferenci T."/>
            <person name="Zhou Z."/>
            <person name="Betteridge T."/>
            <person name="Ren Y."/>
            <person name="Liu Y."/>
            <person name="Feng L."/>
            <person name="Reeves P.R."/>
            <person name="Wang L."/>
        </authorList>
    </citation>
    <scope>NUCLEOTIDE SEQUENCE [LARGE SCALE GENOMIC DNA]</scope>
    <source>
        <strain>K12 / MC4100 / BW2952</strain>
    </source>
</reference>
<name>HIS4_ECOBW</name>
<sequence>MIIPALDLIDGTVVRLHQGDYGKQRDYGNDPLPRLQDYAAQGAEVLHLVDLTGAKDPAKRQIPLIKTLVAGVNVPVQVGGGVRSEEDVAALLEAGVARVVVGSTAVKSQDMVKGWFERFGADALVLALDVRIDEQGNKQVAVSGWQENSGVSLEQLVETYLPVGLKHVLCTDISRDGTLAGSNVSLYEEVCARYPQVAFQSSGGIGDIDDVAALRGTGVRGVIVGRALLEGKFTVKEAIACWQNA</sequence>
<proteinExistence type="inferred from homology"/>
<organism>
    <name type="scientific">Escherichia coli (strain K12 / MC4100 / BW2952)</name>
    <dbReference type="NCBI Taxonomy" id="595496"/>
    <lineage>
        <taxon>Bacteria</taxon>
        <taxon>Pseudomonadati</taxon>
        <taxon>Pseudomonadota</taxon>
        <taxon>Gammaproteobacteria</taxon>
        <taxon>Enterobacterales</taxon>
        <taxon>Enterobacteriaceae</taxon>
        <taxon>Escherichia</taxon>
    </lineage>
</organism>
<gene>
    <name evidence="1" type="primary">hisA</name>
    <name type="ordered locus">BWG_1815</name>
</gene>